<reference key="1">
    <citation type="journal article" date="2003" name="Mol. Microbiol.">
        <title>An integrated analysis of the genome of the hyperthermophilic archaeon Pyrococcus abyssi.</title>
        <authorList>
            <person name="Cohen G.N."/>
            <person name="Barbe V."/>
            <person name="Flament D."/>
            <person name="Galperin M."/>
            <person name="Heilig R."/>
            <person name="Lecompte O."/>
            <person name="Poch O."/>
            <person name="Prieur D."/>
            <person name="Querellou J."/>
            <person name="Ripp R."/>
            <person name="Thierry J.-C."/>
            <person name="Van der Oost J."/>
            <person name="Weissenbach J."/>
            <person name="Zivanovic Y."/>
            <person name="Forterre P."/>
        </authorList>
    </citation>
    <scope>NUCLEOTIDE SEQUENCE [LARGE SCALE GENOMIC DNA]</scope>
    <source>
        <strain>GE5 / Orsay</strain>
    </source>
</reference>
<reference key="2">
    <citation type="journal article" date="2012" name="Curr. Microbiol.">
        <title>Re-annotation of two hyperthermophilic archaea Pyrococcus abyssi GE5 and Pyrococcus furiosus DSM 3638.</title>
        <authorList>
            <person name="Gao J."/>
            <person name="Wang J."/>
        </authorList>
    </citation>
    <scope>GENOME REANNOTATION</scope>
    <source>
        <strain>GE5 / Orsay</strain>
    </source>
</reference>
<organism>
    <name type="scientific">Pyrococcus abyssi (strain GE5 / Orsay)</name>
    <dbReference type="NCBI Taxonomy" id="272844"/>
    <lineage>
        <taxon>Archaea</taxon>
        <taxon>Methanobacteriati</taxon>
        <taxon>Methanobacteriota</taxon>
        <taxon>Thermococci</taxon>
        <taxon>Thermococcales</taxon>
        <taxon>Thermococcaceae</taxon>
        <taxon>Pyrococcus</taxon>
    </lineage>
</organism>
<feature type="chain" id="PRO_0000134328" description="Small ribosomal subunit protein uS2">
    <location>
        <begin position="1"/>
        <end position="202"/>
    </location>
</feature>
<feature type="helix" evidence="2">
    <location>
        <begin position="9"/>
        <end position="15"/>
    </location>
</feature>
<feature type="turn" evidence="2">
    <location>
        <begin position="16"/>
        <end position="18"/>
    </location>
</feature>
<feature type="helix" evidence="2">
    <location>
        <begin position="26"/>
        <end position="28"/>
    </location>
</feature>
<feature type="turn" evidence="2">
    <location>
        <begin position="29"/>
        <end position="31"/>
    </location>
</feature>
<feature type="strand" evidence="2">
    <location>
        <begin position="32"/>
        <end position="35"/>
    </location>
</feature>
<feature type="strand" evidence="2">
    <location>
        <begin position="41"/>
        <end position="43"/>
    </location>
</feature>
<feature type="helix" evidence="2">
    <location>
        <begin position="45"/>
        <end position="59"/>
    </location>
</feature>
<feature type="helix" evidence="2">
    <location>
        <begin position="64"/>
        <end position="66"/>
    </location>
</feature>
<feature type="strand" evidence="2">
    <location>
        <begin position="67"/>
        <end position="71"/>
    </location>
</feature>
<feature type="helix" evidence="2">
    <location>
        <begin position="74"/>
        <end position="76"/>
    </location>
</feature>
<feature type="helix" evidence="2">
    <location>
        <begin position="77"/>
        <end position="87"/>
    </location>
</feature>
<feature type="strand" evidence="2">
    <location>
        <begin position="90"/>
        <end position="94"/>
    </location>
</feature>
<feature type="turn" evidence="2">
    <location>
        <begin position="98"/>
        <end position="102"/>
    </location>
</feature>
<feature type="strand" evidence="2">
    <location>
        <begin position="113"/>
        <end position="118"/>
    </location>
</feature>
<feature type="turn" evidence="2">
    <location>
        <begin position="120"/>
        <end position="123"/>
    </location>
</feature>
<feature type="helix" evidence="2">
    <location>
        <begin position="124"/>
        <end position="133"/>
    </location>
</feature>
<feature type="strand" evidence="2">
    <location>
        <begin position="137"/>
        <end position="141"/>
    </location>
</feature>
<feature type="strand" evidence="2">
    <location>
        <begin position="151"/>
        <end position="156"/>
    </location>
</feature>
<feature type="helix" evidence="2">
    <location>
        <begin position="161"/>
        <end position="178"/>
    </location>
</feature>
<feature type="strand" evidence="2">
    <location>
        <begin position="181"/>
        <end position="184"/>
    </location>
</feature>
<feature type="helix" evidence="2">
    <location>
        <begin position="185"/>
        <end position="187"/>
    </location>
</feature>
<feature type="helix" evidence="2">
    <location>
        <begin position="192"/>
        <end position="195"/>
    </location>
</feature>
<name>RS2_PYRAB</name>
<accession>Q9V191</accession>
<accession>G8ZGP7</accession>
<keyword id="KW-0002">3D-structure</keyword>
<keyword id="KW-0687">Ribonucleoprotein</keyword>
<keyword id="KW-0689">Ribosomal protein</keyword>
<protein>
    <recommendedName>
        <fullName evidence="1">Small ribosomal subunit protein uS2</fullName>
    </recommendedName>
    <alternativeName>
        <fullName>30S ribosomal protein S2</fullName>
    </alternativeName>
</protein>
<gene>
    <name type="primary">rps2</name>
    <name type="ordered locus">PYRAB05370</name>
    <name type="ORF">PAB0368</name>
</gene>
<evidence type="ECO:0000305" key="1"/>
<evidence type="ECO:0007829" key="2">
    <source>
        <dbReference type="PDB" id="7ZHG"/>
    </source>
</evidence>
<proteinExistence type="evidence at protein level"/>
<comment type="similarity">
    <text evidence="1">Belongs to the universal ribosomal protein uS2 family.</text>
</comment>
<dbReference type="EMBL" id="AJ248284">
    <property type="protein sequence ID" value="CAB49459.1"/>
    <property type="molecule type" value="Genomic_DNA"/>
</dbReference>
<dbReference type="EMBL" id="HE613800">
    <property type="protein sequence ID" value="CCE69926.1"/>
    <property type="molecule type" value="Genomic_DNA"/>
</dbReference>
<dbReference type="PIR" id="D75172">
    <property type="entry name" value="D75172"/>
</dbReference>
<dbReference type="RefSeq" id="WP_010867661.1">
    <property type="nucleotide sequence ID" value="NC_000868.1"/>
</dbReference>
<dbReference type="PDB" id="6SW9">
    <property type="method" value="EM"/>
    <property type="resolution" value="4.20 A"/>
    <property type="chains" value="B=1-202"/>
</dbReference>
<dbReference type="PDB" id="6SWC">
    <property type="method" value="EM"/>
    <property type="resolution" value="3.30 A"/>
    <property type="chains" value="B=1-202"/>
</dbReference>
<dbReference type="PDB" id="6SWD">
    <property type="method" value="EM"/>
    <property type="resolution" value="3.20 A"/>
    <property type="chains" value="B=1-202"/>
</dbReference>
<dbReference type="PDB" id="7ZAG">
    <property type="method" value="EM"/>
    <property type="resolution" value="2.77 A"/>
    <property type="chains" value="B=1-202"/>
</dbReference>
<dbReference type="PDB" id="7ZAH">
    <property type="method" value="EM"/>
    <property type="resolution" value="2.70 A"/>
    <property type="chains" value="B=1-202"/>
</dbReference>
<dbReference type="PDB" id="7ZAI">
    <property type="method" value="EM"/>
    <property type="resolution" value="2.60 A"/>
    <property type="chains" value="B=1-202"/>
</dbReference>
<dbReference type="PDB" id="7ZHG">
    <property type="method" value="EM"/>
    <property type="resolution" value="2.25 A"/>
    <property type="chains" value="B=1-202"/>
</dbReference>
<dbReference type="PDBsum" id="6SW9"/>
<dbReference type="PDBsum" id="6SWC"/>
<dbReference type="PDBsum" id="6SWD"/>
<dbReference type="PDBsum" id="7ZAG"/>
<dbReference type="PDBsum" id="7ZAH"/>
<dbReference type="PDBsum" id="7ZAI"/>
<dbReference type="PDBsum" id="7ZHG"/>
<dbReference type="EMDB" id="EMD-10320"/>
<dbReference type="EMDB" id="EMD-10322"/>
<dbReference type="EMDB" id="EMD-10323"/>
<dbReference type="EMDB" id="EMD-14579"/>
<dbReference type="EMDB" id="EMD-14580"/>
<dbReference type="EMDB" id="EMD-14581"/>
<dbReference type="EMDB" id="EMD-14731"/>
<dbReference type="EMDB" id="EMD-8148"/>
<dbReference type="SMR" id="Q9V191"/>
<dbReference type="STRING" id="272844.PAB0368"/>
<dbReference type="KEGG" id="pab:PAB0368"/>
<dbReference type="PATRIC" id="fig|272844.11.peg.572"/>
<dbReference type="eggNOG" id="arCOG04245">
    <property type="taxonomic scope" value="Archaea"/>
</dbReference>
<dbReference type="HOGENOM" id="CLU_058171_3_0_2"/>
<dbReference type="OrthoDB" id="371797at2157"/>
<dbReference type="PhylomeDB" id="Q9V191"/>
<dbReference type="Proteomes" id="UP000000810">
    <property type="component" value="Chromosome"/>
</dbReference>
<dbReference type="Proteomes" id="UP000009139">
    <property type="component" value="Chromosome"/>
</dbReference>
<dbReference type="GO" id="GO:0015935">
    <property type="term" value="C:small ribosomal subunit"/>
    <property type="evidence" value="ECO:0007669"/>
    <property type="project" value="InterPro"/>
</dbReference>
<dbReference type="GO" id="GO:0003735">
    <property type="term" value="F:structural constituent of ribosome"/>
    <property type="evidence" value="ECO:0007669"/>
    <property type="project" value="InterPro"/>
</dbReference>
<dbReference type="GO" id="GO:0006412">
    <property type="term" value="P:translation"/>
    <property type="evidence" value="ECO:0007669"/>
    <property type="project" value="UniProtKB-UniRule"/>
</dbReference>
<dbReference type="CDD" id="cd01425">
    <property type="entry name" value="RPS2"/>
    <property type="match status" value="1"/>
</dbReference>
<dbReference type="FunFam" id="3.40.50.10490:FF:000030">
    <property type="entry name" value="30S ribosomal protein S2"/>
    <property type="match status" value="1"/>
</dbReference>
<dbReference type="Gene3D" id="3.40.50.10490">
    <property type="entry name" value="Glucose-6-phosphate isomerase like protein, domain 1"/>
    <property type="match status" value="1"/>
</dbReference>
<dbReference type="HAMAP" id="MF_00291_A">
    <property type="entry name" value="Ribosomal_uS2_A"/>
    <property type="match status" value="1"/>
</dbReference>
<dbReference type="InterPro" id="IPR001865">
    <property type="entry name" value="Ribosomal_uS2"/>
</dbReference>
<dbReference type="InterPro" id="IPR023454">
    <property type="entry name" value="Ribosomal_uS2_arc"/>
</dbReference>
<dbReference type="InterPro" id="IPR018130">
    <property type="entry name" value="Ribosomal_uS2_CS"/>
</dbReference>
<dbReference type="InterPro" id="IPR005707">
    <property type="entry name" value="Ribosomal_uS2_euk/arc"/>
</dbReference>
<dbReference type="InterPro" id="IPR023591">
    <property type="entry name" value="Ribosomal_uS2_flav_dom_sf"/>
</dbReference>
<dbReference type="NCBIfam" id="TIGR01012">
    <property type="entry name" value="uS2_euk_arch"/>
    <property type="match status" value="1"/>
</dbReference>
<dbReference type="PANTHER" id="PTHR11489">
    <property type="entry name" value="40S RIBOSOMAL PROTEIN SA"/>
    <property type="match status" value="1"/>
</dbReference>
<dbReference type="Pfam" id="PF00318">
    <property type="entry name" value="Ribosomal_S2"/>
    <property type="match status" value="2"/>
</dbReference>
<dbReference type="PRINTS" id="PR00395">
    <property type="entry name" value="RIBOSOMALS2"/>
</dbReference>
<dbReference type="SUPFAM" id="SSF52313">
    <property type="entry name" value="Ribosomal protein S2"/>
    <property type="match status" value="1"/>
</dbReference>
<dbReference type="PROSITE" id="PS00962">
    <property type="entry name" value="RIBOSOMAL_S2_1"/>
    <property type="match status" value="1"/>
</dbReference>
<dbReference type="PROSITE" id="PS00963">
    <property type="entry name" value="RIBOSOMAL_S2_2"/>
    <property type="match status" value="1"/>
</dbReference>
<sequence length="202" mass="22994">MADEYLVPLDQYLAAGVHIGTQQKTKDMKKFIYRVRQDGLYVLDVRKTDERLKVAGKFLARFDPQSILAVSVRLYGQKPVKKFGEVTGARAIPGRFLPGTMTNPAVKNFFEPDVIIITDPRADHQAMKEAIEIGIPIVALVDTENLLSYVDLAIPTNNKGRKALALIYWILAREILYNRGEISSREEFKIPVEEFEMKIVRR</sequence>